<protein>
    <recommendedName>
        <fullName evidence="1">Large ribosomal subunit protein bL21</fullName>
    </recommendedName>
    <alternativeName>
        <fullName evidence="2">50S ribosomal protein L21</fullName>
    </alternativeName>
</protein>
<dbReference type="EMBL" id="AE009442">
    <property type="protein sequence ID" value="AAO29287.1"/>
    <property type="molecule type" value="Genomic_DNA"/>
</dbReference>
<dbReference type="RefSeq" id="WP_004088409.1">
    <property type="nucleotide sequence ID" value="NC_004556.1"/>
</dbReference>
<dbReference type="SMR" id="Q87BL0"/>
<dbReference type="GeneID" id="93905264"/>
<dbReference type="KEGG" id="xft:PD_1443"/>
<dbReference type="HOGENOM" id="CLU_061463_3_3_6"/>
<dbReference type="Proteomes" id="UP000002516">
    <property type="component" value="Chromosome"/>
</dbReference>
<dbReference type="GO" id="GO:0005737">
    <property type="term" value="C:cytoplasm"/>
    <property type="evidence" value="ECO:0007669"/>
    <property type="project" value="UniProtKB-ARBA"/>
</dbReference>
<dbReference type="GO" id="GO:1990904">
    <property type="term" value="C:ribonucleoprotein complex"/>
    <property type="evidence" value="ECO:0007669"/>
    <property type="project" value="UniProtKB-KW"/>
</dbReference>
<dbReference type="GO" id="GO:0005840">
    <property type="term" value="C:ribosome"/>
    <property type="evidence" value="ECO:0007669"/>
    <property type="project" value="UniProtKB-KW"/>
</dbReference>
<dbReference type="GO" id="GO:0019843">
    <property type="term" value="F:rRNA binding"/>
    <property type="evidence" value="ECO:0007669"/>
    <property type="project" value="UniProtKB-UniRule"/>
</dbReference>
<dbReference type="GO" id="GO:0003735">
    <property type="term" value="F:structural constituent of ribosome"/>
    <property type="evidence" value="ECO:0007669"/>
    <property type="project" value="InterPro"/>
</dbReference>
<dbReference type="GO" id="GO:0006412">
    <property type="term" value="P:translation"/>
    <property type="evidence" value="ECO:0007669"/>
    <property type="project" value="UniProtKB-UniRule"/>
</dbReference>
<dbReference type="HAMAP" id="MF_01363">
    <property type="entry name" value="Ribosomal_bL21"/>
    <property type="match status" value="1"/>
</dbReference>
<dbReference type="InterPro" id="IPR028909">
    <property type="entry name" value="bL21-like"/>
</dbReference>
<dbReference type="InterPro" id="IPR036164">
    <property type="entry name" value="bL21-like_sf"/>
</dbReference>
<dbReference type="InterPro" id="IPR001787">
    <property type="entry name" value="Ribosomal_bL21"/>
</dbReference>
<dbReference type="InterPro" id="IPR018258">
    <property type="entry name" value="Ribosomal_bL21_CS"/>
</dbReference>
<dbReference type="NCBIfam" id="TIGR00061">
    <property type="entry name" value="L21"/>
    <property type="match status" value="1"/>
</dbReference>
<dbReference type="PANTHER" id="PTHR21349">
    <property type="entry name" value="50S RIBOSOMAL PROTEIN L21"/>
    <property type="match status" value="1"/>
</dbReference>
<dbReference type="PANTHER" id="PTHR21349:SF0">
    <property type="entry name" value="LARGE RIBOSOMAL SUBUNIT PROTEIN BL21M"/>
    <property type="match status" value="1"/>
</dbReference>
<dbReference type="Pfam" id="PF00829">
    <property type="entry name" value="Ribosomal_L21p"/>
    <property type="match status" value="1"/>
</dbReference>
<dbReference type="SUPFAM" id="SSF141091">
    <property type="entry name" value="L21p-like"/>
    <property type="match status" value="1"/>
</dbReference>
<dbReference type="PROSITE" id="PS01169">
    <property type="entry name" value="RIBOSOMAL_L21"/>
    <property type="match status" value="1"/>
</dbReference>
<reference key="1">
    <citation type="journal article" date="2003" name="J. Bacteriol.">
        <title>Comparative analyses of the complete genome sequences of Pierce's disease and citrus variegated chlorosis strains of Xylella fastidiosa.</title>
        <authorList>
            <person name="Van Sluys M.A."/>
            <person name="de Oliveira M.C."/>
            <person name="Monteiro-Vitorello C.B."/>
            <person name="Miyaki C.Y."/>
            <person name="Furlan L.R."/>
            <person name="Camargo L.E.A."/>
            <person name="da Silva A.C.R."/>
            <person name="Moon D.H."/>
            <person name="Takita M.A."/>
            <person name="Lemos E.G.M."/>
            <person name="Machado M.A."/>
            <person name="Ferro M.I.T."/>
            <person name="da Silva F.R."/>
            <person name="Goldman M.H.S."/>
            <person name="Goldman G.H."/>
            <person name="Lemos M.V.F."/>
            <person name="El-Dorry H."/>
            <person name="Tsai S.M."/>
            <person name="Carrer H."/>
            <person name="Carraro D.M."/>
            <person name="de Oliveira R.C."/>
            <person name="Nunes L.R."/>
            <person name="Siqueira W.J."/>
            <person name="Coutinho L.L."/>
            <person name="Kimura E.T."/>
            <person name="Ferro E.S."/>
            <person name="Harakava R."/>
            <person name="Kuramae E.E."/>
            <person name="Marino C.L."/>
            <person name="Giglioti E."/>
            <person name="Abreu I.L."/>
            <person name="Alves L.M.C."/>
            <person name="do Amaral A.M."/>
            <person name="Baia G.S."/>
            <person name="Blanco S.R."/>
            <person name="Brito M.S."/>
            <person name="Cannavan F.S."/>
            <person name="Celestino A.V."/>
            <person name="da Cunha A.F."/>
            <person name="Fenille R.C."/>
            <person name="Ferro J.A."/>
            <person name="Formighieri E.F."/>
            <person name="Kishi L.T."/>
            <person name="Leoni S.G."/>
            <person name="Oliveira A.R."/>
            <person name="Rosa V.E. Jr."/>
            <person name="Sassaki F.T."/>
            <person name="Sena J.A.D."/>
            <person name="de Souza A.A."/>
            <person name="Truffi D."/>
            <person name="Tsukumo F."/>
            <person name="Yanai G.M."/>
            <person name="Zaros L.G."/>
            <person name="Civerolo E.L."/>
            <person name="Simpson A.J.G."/>
            <person name="Almeida N.F. Jr."/>
            <person name="Setubal J.C."/>
            <person name="Kitajima J.P."/>
        </authorList>
    </citation>
    <scope>NUCLEOTIDE SEQUENCE [LARGE SCALE GENOMIC DNA]</scope>
    <source>
        <strain>Temecula1 / ATCC 700964</strain>
    </source>
</reference>
<proteinExistence type="inferred from homology"/>
<feature type="chain" id="PRO_0000269434" description="Large ribosomal subunit protein bL21">
    <location>
        <begin position="1"/>
        <end position="106"/>
    </location>
</feature>
<gene>
    <name evidence="1" type="primary">rplU</name>
    <name type="ordered locus">PD_1443</name>
</gene>
<sequence>MYAVLVTGGKQYRVVQGETLRVEKLDVETGGDVTFNSVLLMGGSDGIHVGEALKDASVTAKVVAHGRARKVRIIKFRRRKHHMKHQGHRQYYTEIQITGISGPAKQ</sequence>
<evidence type="ECO:0000255" key="1">
    <source>
        <dbReference type="HAMAP-Rule" id="MF_01363"/>
    </source>
</evidence>
<evidence type="ECO:0000305" key="2"/>
<organism>
    <name type="scientific">Xylella fastidiosa (strain Temecula1 / ATCC 700964)</name>
    <dbReference type="NCBI Taxonomy" id="183190"/>
    <lineage>
        <taxon>Bacteria</taxon>
        <taxon>Pseudomonadati</taxon>
        <taxon>Pseudomonadota</taxon>
        <taxon>Gammaproteobacteria</taxon>
        <taxon>Lysobacterales</taxon>
        <taxon>Lysobacteraceae</taxon>
        <taxon>Xylella</taxon>
    </lineage>
</organism>
<name>RL21_XYLFT</name>
<comment type="function">
    <text evidence="1">This protein binds to 23S rRNA in the presence of protein L20.</text>
</comment>
<comment type="subunit">
    <text evidence="1">Part of the 50S ribosomal subunit. Contacts protein L20.</text>
</comment>
<comment type="similarity">
    <text evidence="1">Belongs to the bacterial ribosomal protein bL21 family.</text>
</comment>
<keyword id="KW-1185">Reference proteome</keyword>
<keyword id="KW-0687">Ribonucleoprotein</keyword>
<keyword id="KW-0689">Ribosomal protein</keyword>
<keyword id="KW-0694">RNA-binding</keyword>
<keyword id="KW-0699">rRNA-binding</keyword>
<accession>Q87BL0</accession>